<evidence type="ECO:0000255" key="1">
    <source>
        <dbReference type="HAMAP-Rule" id="MF_02011"/>
    </source>
</evidence>
<evidence type="ECO:0000256" key="2">
    <source>
        <dbReference type="SAM" id="MobiDB-lite"/>
    </source>
</evidence>
<dbReference type="EMBL" id="AJ938182">
    <property type="protein sequence ID" value="CAI80999.1"/>
    <property type="molecule type" value="Genomic_DNA"/>
</dbReference>
<dbReference type="RefSeq" id="WP_001286320.1">
    <property type="nucleotide sequence ID" value="NC_007622.1"/>
</dbReference>
<dbReference type="SMR" id="Q2YY60"/>
<dbReference type="GeneID" id="98345812"/>
<dbReference type="KEGG" id="sab:SAB1310c"/>
<dbReference type="HOGENOM" id="CLU_140309_1_0_9"/>
<dbReference type="GO" id="GO:0005737">
    <property type="term" value="C:cytoplasm"/>
    <property type="evidence" value="ECO:0007669"/>
    <property type="project" value="UniProtKB-SubCell"/>
</dbReference>
<dbReference type="GO" id="GO:0051301">
    <property type="term" value="P:cell division"/>
    <property type="evidence" value="ECO:0007669"/>
    <property type="project" value="UniProtKB-UniRule"/>
</dbReference>
<dbReference type="GO" id="GO:0008360">
    <property type="term" value="P:regulation of cell shape"/>
    <property type="evidence" value="ECO:0007669"/>
    <property type="project" value="UniProtKB-UniRule"/>
</dbReference>
<dbReference type="Gene3D" id="6.10.250.660">
    <property type="match status" value="1"/>
</dbReference>
<dbReference type="HAMAP" id="MF_02011">
    <property type="entry name" value="GpsB"/>
    <property type="match status" value="1"/>
</dbReference>
<dbReference type="InterPro" id="IPR011229">
    <property type="entry name" value="Cell_cycle_GpsB"/>
</dbReference>
<dbReference type="InterPro" id="IPR019933">
    <property type="entry name" value="DivIVA_domain"/>
</dbReference>
<dbReference type="InterPro" id="IPR007793">
    <property type="entry name" value="DivIVA_fam"/>
</dbReference>
<dbReference type="NCBIfam" id="TIGR03544">
    <property type="entry name" value="DivI1A_domain"/>
    <property type="match status" value="1"/>
</dbReference>
<dbReference type="NCBIfam" id="NF010725">
    <property type="entry name" value="PRK14127.1"/>
    <property type="match status" value="1"/>
</dbReference>
<dbReference type="PANTHER" id="PTHR35794:SF1">
    <property type="entry name" value="CELL CYCLE PROTEIN GPSB"/>
    <property type="match status" value="1"/>
</dbReference>
<dbReference type="PANTHER" id="PTHR35794">
    <property type="entry name" value="CELL DIVISION PROTEIN DIVIVA"/>
    <property type="match status" value="1"/>
</dbReference>
<dbReference type="Pfam" id="PF05103">
    <property type="entry name" value="DivIVA"/>
    <property type="match status" value="1"/>
</dbReference>
<dbReference type="PIRSF" id="PIRSF029938">
    <property type="entry name" value="UCP029938"/>
    <property type="match status" value="1"/>
</dbReference>
<comment type="function">
    <text evidence="1">Divisome component that associates with the complex late in its assembly, after the Z-ring is formed, and is dependent on DivIC and PBP2B for its recruitment to the divisome. Together with EzrA, is a key component of the system that regulates PBP1 localization during cell cycle progression. Its main role could be the removal of PBP1 from the cell pole after pole maturation is completed. Also contributes to the recruitment of PBP1 to the division complex. Not essential for septum formation.</text>
</comment>
<comment type="subunit">
    <text evidence="1">Forms polymers through the coiled coil domains. Interacts with PBP1, MreC and EzrA.</text>
</comment>
<comment type="subcellular location">
    <subcellularLocation>
        <location evidence="1">Cytoplasm</location>
    </subcellularLocation>
    <text evidence="1">Shuttles between the lateral wall and the division site in a cell cycle-dependent manner.</text>
</comment>
<comment type="similarity">
    <text evidence="1">Belongs to the GpsB family.</text>
</comment>
<proteinExistence type="inferred from homology"/>
<keyword id="KW-0131">Cell cycle</keyword>
<keyword id="KW-0132">Cell division</keyword>
<keyword id="KW-0133">Cell shape</keyword>
<keyword id="KW-0175">Coiled coil</keyword>
<keyword id="KW-0963">Cytoplasm</keyword>
<organism>
    <name type="scientific">Staphylococcus aureus (strain bovine RF122 / ET3-1)</name>
    <dbReference type="NCBI Taxonomy" id="273036"/>
    <lineage>
        <taxon>Bacteria</taxon>
        <taxon>Bacillati</taxon>
        <taxon>Bacillota</taxon>
        <taxon>Bacilli</taxon>
        <taxon>Bacillales</taxon>
        <taxon>Staphylococcaceae</taxon>
        <taxon>Staphylococcus</taxon>
    </lineage>
</organism>
<protein>
    <recommendedName>
        <fullName evidence="1">Cell cycle protein GpsB</fullName>
    </recommendedName>
    <alternativeName>
        <fullName evidence="1">Guiding PBP1-shuttling protein</fullName>
    </alternativeName>
</protein>
<sequence length="114" mass="13151">MSDVSLKLSAKDIYEKDFEKTMARGYRREEVDAFLDDIIADYQKMADMNNEVVKLSEENHKLKKELEELRLRVATSRPQDNKSFSSNNTTTNTSSNNVDILKRISNLEKAVFGK</sequence>
<feature type="chain" id="PRO_0000337931" description="Cell cycle protein GpsB">
    <location>
        <begin position="1"/>
        <end position="114"/>
    </location>
</feature>
<feature type="region of interest" description="Disordered" evidence="2">
    <location>
        <begin position="74"/>
        <end position="99"/>
    </location>
</feature>
<feature type="coiled-coil region" evidence="1">
    <location>
        <begin position="42"/>
        <end position="77"/>
    </location>
</feature>
<feature type="compositionally biased region" description="Low complexity" evidence="2">
    <location>
        <begin position="85"/>
        <end position="97"/>
    </location>
</feature>
<reference key="1">
    <citation type="journal article" date="2007" name="PLoS ONE">
        <title>Molecular correlates of host specialization in Staphylococcus aureus.</title>
        <authorList>
            <person name="Herron-Olson L."/>
            <person name="Fitzgerald J.R."/>
            <person name="Musser J.M."/>
            <person name="Kapur V."/>
        </authorList>
    </citation>
    <scope>NUCLEOTIDE SEQUENCE [LARGE SCALE GENOMIC DNA]</scope>
    <source>
        <strain>bovine RF122 / ET3-1</strain>
    </source>
</reference>
<accession>Q2YY60</accession>
<gene>
    <name evidence="1" type="primary">gpsB</name>
    <name type="ordered locus">SAB1310c</name>
</gene>
<name>GPSB_STAAB</name>